<keyword id="KW-0963">Cytoplasm</keyword>
<keyword id="KW-0378">Hydrolase</keyword>
<keyword id="KW-0645">Protease</keyword>
<keyword id="KW-1185">Reference proteome</keyword>
<keyword id="KW-0720">Serine protease</keyword>
<accession>A5CXJ8</accession>
<organism>
    <name type="scientific">Vesicomyosocius okutanii subsp. Calyptogena okutanii (strain HA)</name>
    <dbReference type="NCBI Taxonomy" id="412965"/>
    <lineage>
        <taxon>Bacteria</taxon>
        <taxon>Pseudomonadati</taxon>
        <taxon>Pseudomonadota</taxon>
        <taxon>Gammaproteobacteria</taxon>
        <taxon>Candidatus Pseudothioglobaceae</taxon>
        <taxon>Candidatus Vesicomyosocius</taxon>
    </lineage>
</organism>
<evidence type="ECO:0000255" key="1">
    <source>
        <dbReference type="HAMAP-Rule" id="MF_00444"/>
    </source>
</evidence>
<gene>
    <name evidence="1" type="primary">clpP</name>
    <name type="ordered locus">COSY_0203</name>
</gene>
<dbReference type="EC" id="3.4.21.92" evidence="1"/>
<dbReference type="EMBL" id="AP009247">
    <property type="protein sequence ID" value="BAF61333.1"/>
    <property type="molecule type" value="Genomic_DNA"/>
</dbReference>
<dbReference type="RefSeq" id="WP_011929603.1">
    <property type="nucleotide sequence ID" value="NC_009465.1"/>
</dbReference>
<dbReference type="SMR" id="A5CXJ8"/>
<dbReference type="STRING" id="412965.COSY_0203"/>
<dbReference type="MEROPS" id="S14.001"/>
<dbReference type="KEGG" id="vok:COSY_0203"/>
<dbReference type="eggNOG" id="COG0740">
    <property type="taxonomic scope" value="Bacteria"/>
</dbReference>
<dbReference type="HOGENOM" id="CLU_058707_3_2_6"/>
<dbReference type="OrthoDB" id="9802800at2"/>
<dbReference type="Proteomes" id="UP000000247">
    <property type="component" value="Chromosome"/>
</dbReference>
<dbReference type="GO" id="GO:0005737">
    <property type="term" value="C:cytoplasm"/>
    <property type="evidence" value="ECO:0007669"/>
    <property type="project" value="UniProtKB-SubCell"/>
</dbReference>
<dbReference type="GO" id="GO:0009368">
    <property type="term" value="C:endopeptidase Clp complex"/>
    <property type="evidence" value="ECO:0007669"/>
    <property type="project" value="TreeGrafter"/>
</dbReference>
<dbReference type="GO" id="GO:0004176">
    <property type="term" value="F:ATP-dependent peptidase activity"/>
    <property type="evidence" value="ECO:0007669"/>
    <property type="project" value="InterPro"/>
</dbReference>
<dbReference type="GO" id="GO:0051117">
    <property type="term" value="F:ATPase binding"/>
    <property type="evidence" value="ECO:0007669"/>
    <property type="project" value="TreeGrafter"/>
</dbReference>
<dbReference type="GO" id="GO:0004252">
    <property type="term" value="F:serine-type endopeptidase activity"/>
    <property type="evidence" value="ECO:0007669"/>
    <property type="project" value="UniProtKB-UniRule"/>
</dbReference>
<dbReference type="GO" id="GO:0006515">
    <property type="term" value="P:protein quality control for misfolded or incompletely synthesized proteins"/>
    <property type="evidence" value="ECO:0007669"/>
    <property type="project" value="TreeGrafter"/>
</dbReference>
<dbReference type="CDD" id="cd07017">
    <property type="entry name" value="S14_ClpP_2"/>
    <property type="match status" value="1"/>
</dbReference>
<dbReference type="FunFam" id="3.90.226.10:FF:000001">
    <property type="entry name" value="ATP-dependent Clp protease proteolytic subunit"/>
    <property type="match status" value="1"/>
</dbReference>
<dbReference type="Gene3D" id="3.90.226.10">
    <property type="entry name" value="2-enoyl-CoA Hydratase, Chain A, domain 1"/>
    <property type="match status" value="1"/>
</dbReference>
<dbReference type="HAMAP" id="MF_00444">
    <property type="entry name" value="ClpP"/>
    <property type="match status" value="1"/>
</dbReference>
<dbReference type="InterPro" id="IPR001907">
    <property type="entry name" value="ClpP"/>
</dbReference>
<dbReference type="InterPro" id="IPR029045">
    <property type="entry name" value="ClpP/crotonase-like_dom_sf"/>
</dbReference>
<dbReference type="InterPro" id="IPR023562">
    <property type="entry name" value="ClpP/TepA"/>
</dbReference>
<dbReference type="InterPro" id="IPR018215">
    <property type="entry name" value="ClpP_Ser_AS"/>
</dbReference>
<dbReference type="NCBIfam" id="TIGR00493">
    <property type="entry name" value="clpP"/>
    <property type="match status" value="1"/>
</dbReference>
<dbReference type="NCBIfam" id="NF001368">
    <property type="entry name" value="PRK00277.1"/>
    <property type="match status" value="1"/>
</dbReference>
<dbReference type="NCBIfam" id="NF009205">
    <property type="entry name" value="PRK12553.1"/>
    <property type="match status" value="1"/>
</dbReference>
<dbReference type="PANTHER" id="PTHR10381">
    <property type="entry name" value="ATP-DEPENDENT CLP PROTEASE PROTEOLYTIC SUBUNIT"/>
    <property type="match status" value="1"/>
</dbReference>
<dbReference type="PANTHER" id="PTHR10381:SF70">
    <property type="entry name" value="ATP-DEPENDENT CLP PROTEASE PROTEOLYTIC SUBUNIT"/>
    <property type="match status" value="1"/>
</dbReference>
<dbReference type="Pfam" id="PF00574">
    <property type="entry name" value="CLP_protease"/>
    <property type="match status" value="1"/>
</dbReference>
<dbReference type="PRINTS" id="PR00127">
    <property type="entry name" value="CLPPROTEASEP"/>
</dbReference>
<dbReference type="SUPFAM" id="SSF52096">
    <property type="entry name" value="ClpP/crotonase"/>
    <property type="match status" value="1"/>
</dbReference>
<dbReference type="PROSITE" id="PS00381">
    <property type="entry name" value="CLP_PROTEASE_SER"/>
    <property type="match status" value="1"/>
</dbReference>
<protein>
    <recommendedName>
        <fullName evidence="1">ATP-dependent Clp protease proteolytic subunit</fullName>
        <ecNumber evidence="1">3.4.21.92</ecNumber>
    </recommendedName>
    <alternativeName>
        <fullName evidence="1">Endopeptidase Clp</fullName>
    </alternativeName>
</protein>
<proteinExistence type="inferred from homology"/>
<comment type="function">
    <text evidence="1">Cleaves peptides in various proteins in a process that requires ATP hydrolysis. Has a chymotrypsin-like activity. Plays a major role in the degradation of misfolded proteins.</text>
</comment>
<comment type="catalytic activity">
    <reaction evidence="1">
        <text>Hydrolysis of proteins to small peptides in the presence of ATP and magnesium. alpha-casein is the usual test substrate. In the absence of ATP, only oligopeptides shorter than five residues are hydrolyzed (such as succinyl-Leu-Tyr-|-NHMec, and Leu-Tyr-Leu-|-Tyr-Trp, in which cleavage of the -Tyr-|-Leu- and -Tyr-|-Trp bonds also occurs).</text>
        <dbReference type="EC" id="3.4.21.92"/>
    </reaction>
</comment>
<comment type="subunit">
    <text evidence="1">Fourteen ClpP subunits assemble into 2 heptameric rings which stack back to back to give a disk-like structure with a central cavity, resembling the structure of eukaryotic proteasomes.</text>
</comment>
<comment type="subcellular location">
    <subcellularLocation>
        <location evidence="1">Cytoplasm</location>
    </subcellularLocation>
</comment>
<comment type="similarity">
    <text evidence="1">Belongs to the peptidase S14 family.</text>
</comment>
<name>CLPP_VESOH</name>
<reference key="1">
    <citation type="journal article" date="2007" name="Curr. Biol.">
        <title>Reduced genome of the thioautotrophic intracellular symbiont in a deep-sea clam, Calyptogena okutanii.</title>
        <authorList>
            <person name="Kuwahara H."/>
            <person name="Yoshida T."/>
            <person name="Takaki Y."/>
            <person name="Shimamura S."/>
            <person name="Nishi S."/>
            <person name="Harada M."/>
            <person name="Matsuyama K."/>
            <person name="Takishita K."/>
            <person name="Kawato M."/>
            <person name="Uematsu K."/>
            <person name="Fujiwara Y."/>
            <person name="Sato T."/>
            <person name="Kato C."/>
            <person name="Kitagawa M."/>
            <person name="Kato I."/>
            <person name="Maruyama T."/>
        </authorList>
    </citation>
    <scope>NUCLEOTIDE SEQUENCE [LARGE SCALE GENOMIC DNA]</scope>
    <source>
        <strain>HA</strain>
    </source>
</reference>
<sequence>MNIKNLNQIPIVVEQSARGERAYDIYSRLLKERIIFLVGPIEDYMANVVVAQLLFLESENPDKDIHLYINSPGGSVSAGLAIYDTMQFIKSDISTLCIGQAASMGALLLTAGTKGKRFALPNVRCMIHQPLGGFSGQASDVDIHAQEILKVRANLNQIFKLHTGQVIKTIQKDTDRDNFMSADEATKYGLIDKVLAKR</sequence>
<feature type="chain" id="PRO_1000026144" description="ATP-dependent Clp protease proteolytic subunit">
    <location>
        <begin position="1"/>
        <end position="198"/>
    </location>
</feature>
<feature type="active site" description="Nucleophile" evidence="1">
    <location>
        <position position="103"/>
    </location>
</feature>
<feature type="active site" evidence="1">
    <location>
        <position position="128"/>
    </location>
</feature>